<accession>C6Y4B7</accession>
<feature type="chain" id="PRO_0000389129" description="Uncharacterized protein C227.19c">
    <location>
        <begin position="1"/>
        <end position="83"/>
    </location>
</feature>
<reference key="1">
    <citation type="journal article" date="2002" name="Nature">
        <title>The genome sequence of Schizosaccharomyces pombe.</title>
        <authorList>
            <person name="Wood V."/>
            <person name="Gwilliam R."/>
            <person name="Rajandream M.A."/>
            <person name="Lyne M.H."/>
            <person name="Lyne R."/>
            <person name="Stewart A."/>
            <person name="Sgouros J.G."/>
            <person name="Peat N."/>
            <person name="Hayles J."/>
            <person name="Baker S.G."/>
            <person name="Basham D."/>
            <person name="Bowman S."/>
            <person name="Brooks K."/>
            <person name="Brown D."/>
            <person name="Brown S."/>
            <person name="Chillingworth T."/>
            <person name="Churcher C.M."/>
            <person name="Collins M."/>
            <person name="Connor R."/>
            <person name="Cronin A."/>
            <person name="Davis P."/>
            <person name="Feltwell T."/>
            <person name="Fraser A."/>
            <person name="Gentles S."/>
            <person name="Goble A."/>
            <person name="Hamlin N."/>
            <person name="Harris D.E."/>
            <person name="Hidalgo J."/>
            <person name="Hodgson G."/>
            <person name="Holroyd S."/>
            <person name="Hornsby T."/>
            <person name="Howarth S."/>
            <person name="Huckle E.J."/>
            <person name="Hunt S."/>
            <person name="Jagels K."/>
            <person name="James K.D."/>
            <person name="Jones L."/>
            <person name="Jones M."/>
            <person name="Leather S."/>
            <person name="McDonald S."/>
            <person name="McLean J."/>
            <person name="Mooney P."/>
            <person name="Moule S."/>
            <person name="Mungall K.L."/>
            <person name="Murphy L.D."/>
            <person name="Niblett D."/>
            <person name="Odell C."/>
            <person name="Oliver K."/>
            <person name="O'Neil S."/>
            <person name="Pearson D."/>
            <person name="Quail M.A."/>
            <person name="Rabbinowitsch E."/>
            <person name="Rutherford K.M."/>
            <person name="Rutter S."/>
            <person name="Saunders D."/>
            <person name="Seeger K."/>
            <person name="Sharp S."/>
            <person name="Skelton J."/>
            <person name="Simmonds M.N."/>
            <person name="Squares R."/>
            <person name="Squares S."/>
            <person name="Stevens K."/>
            <person name="Taylor K."/>
            <person name="Taylor R.G."/>
            <person name="Tivey A."/>
            <person name="Walsh S.V."/>
            <person name="Warren T."/>
            <person name="Whitehead S."/>
            <person name="Woodward J.R."/>
            <person name="Volckaert G."/>
            <person name="Aert R."/>
            <person name="Robben J."/>
            <person name="Grymonprez B."/>
            <person name="Weltjens I."/>
            <person name="Vanstreels E."/>
            <person name="Rieger M."/>
            <person name="Schaefer M."/>
            <person name="Mueller-Auer S."/>
            <person name="Gabel C."/>
            <person name="Fuchs M."/>
            <person name="Duesterhoeft A."/>
            <person name="Fritzc C."/>
            <person name="Holzer E."/>
            <person name="Moestl D."/>
            <person name="Hilbert H."/>
            <person name="Borzym K."/>
            <person name="Langer I."/>
            <person name="Beck A."/>
            <person name="Lehrach H."/>
            <person name="Reinhardt R."/>
            <person name="Pohl T.M."/>
            <person name="Eger P."/>
            <person name="Zimmermann W."/>
            <person name="Wedler H."/>
            <person name="Wambutt R."/>
            <person name="Purnelle B."/>
            <person name="Goffeau A."/>
            <person name="Cadieu E."/>
            <person name="Dreano S."/>
            <person name="Gloux S."/>
            <person name="Lelaure V."/>
            <person name="Mottier S."/>
            <person name="Galibert F."/>
            <person name="Aves S.J."/>
            <person name="Xiang Z."/>
            <person name="Hunt C."/>
            <person name="Moore K."/>
            <person name="Hurst S.M."/>
            <person name="Lucas M."/>
            <person name="Rochet M."/>
            <person name="Gaillardin C."/>
            <person name="Tallada V.A."/>
            <person name="Garzon A."/>
            <person name="Thode G."/>
            <person name="Daga R.R."/>
            <person name="Cruzado L."/>
            <person name="Jimenez J."/>
            <person name="Sanchez M."/>
            <person name="del Rey F."/>
            <person name="Benito J."/>
            <person name="Dominguez A."/>
            <person name="Revuelta J.L."/>
            <person name="Moreno S."/>
            <person name="Armstrong J."/>
            <person name="Forsburg S.L."/>
            <person name="Cerutti L."/>
            <person name="Lowe T."/>
            <person name="McCombie W.R."/>
            <person name="Paulsen I."/>
            <person name="Potashkin J."/>
            <person name="Shpakovski G.V."/>
            <person name="Ussery D."/>
            <person name="Barrell B.G."/>
            <person name="Nurse P."/>
        </authorList>
    </citation>
    <scope>NUCLEOTIDE SEQUENCE [LARGE SCALE GENOMIC DNA]</scope>
    <source>
        <strain>972 / ATCC 24843</strain>
    </source>
</reference>
<reference key="2">
    <citation type="journal article" date="2008" name="Nature">
        <title>Dynamic repertoire of a eukaryotic transcriptome surveyed at single-nucleotide resolution.</title>
        <authorList>
            <person name="Wilhelm B.T."/>
            <person name="Marguerat S."/>
            <person name="Watt S."/>
            <person name="Schubert F."/>
            <person name="Wood V."/>
            <person name="Goodhead I."/>
            <person name="Penkett C.J."/>
            <person name="Rogers J."/>
            <person name="Baehler J."/>
        </authorList>
    </citation>
    <scope>IDENTIFICATION</scope>
</reference>
<keyword id="KW-1185">Reference proteome</keyword>
<proteinExistence type="evidence at transcript level"/>
<protein>
    <recommendedName>
        <fullName>Uncharacterized protein C227.19c</fullName>
    </recommendedName>
</protein>
<organism>
    <name type="scientific">Schizosaccharomyces pombe (strain 972 / ATCC 24843)</name>
    <name type="common">Fission yeast</name>
    <dbReference type="NCBI Taxonomy" id="284812"/>
    <lineage>
        <taxon>Eukaryota</taxon>
        <taxon>Fungi</taxon>
        <taxon>Dikarya</taxon>
        <taxon>Ascomycota</taxon>
        <taxon>Taphrinomycotina</taxon>
        <taxon>Schizosaccharomycetes</taxon>
        <taxon>Schizosaccharomycetales</taxon>
        <taxon>Schizosaccharomycetaceae</taxon>
        <taxon>Schizosaccharomyces</taxon>
    </lineage>
</organism>
<dbReference type="EMBL" id="CU329670">
    <property type="protein sequence ID" value="CBA11490.1"/>
    <property type="molecule type" value="Genomic_DNA"/>
</dbReference>
<dbReference type="RefSeq" id="XP_002742499.1">
    <property type="nucleotide sequence ID" value="XM_002742453.1"/>
</dbReference>
<dbReference type="SMR" id="C6Y4B7"/>
<dbReference type="BioGRID" id="1028554">
    <property type="interactions" value="1"/>
</dbReference>
<dbReference type="ComplexPortal" id="CPX-10121">
    <property type="entry name" value="Glycosylphosphatidylinositol-N-acetylglucosaminyltransferase complex"/>
</dbReference>
<dbReference type="STRING" id="284812.C6Y4B7"/>
<dbReference type="PaxDb" id="4896-SPAC227.19c.1"/>
<dbReference type="EnsemblFungi" id="SPAC227.19c.1">
    <property type="protein sequence ID" value="SPAC227.19c.1:pep"/>
    <property type="gene ID" value="SPAC227.19c"/>
</dbReference>
<dbReference type="PomBase" id="SPAC227.19c"/>
<dbReference type="VEuPathDB" id="FungiDB:SPAC227.19c"/>
<dbReference type="HOGENOM" id="CLU_2543899_0_0_1"/>
<dbReference type="InParanoid" id="C6Y4B7"/>
<dbReference type="OMA" id="GLKYFRH"/>
<dbReference type="PRO" id="PR:C6Y4B7"/>
<dbReference type="Proteomes" id="UP000002485">
    <property type="component" value="Chromosome I"/>
</dbReference>
<dbReference type="GO" id="GO:0000506">
    <property type="term" value="C:glycosylphosphatidylinositol-N-acetylglucosaminyltransferase (GPI-GnT) complex"/>
    <property type="evidence" value="ECO:0000266"/>
    <property type="project" value="PomBase"/>
</dbReference>
<dbReference type="GO" id="GO:0006506">
    <property type="term" value="P:GPI anchor biosynthetic process"/>
    <property type="evidence" value="ECO:0000255"/>
    <property type="project" value="PomBase"/>
</dbReference>
<dbReference type="InterPro" id="IPR029164">
    <property type="entry name" value="PIG-Y"/>
</dbReference>
<dbReference type="Pfam" id="PF15159">
    <property type="entry name" value="PIG-Y"/>
    <property type="match status" value="1"/>
</dbReference>
<name>YIDS_SCHPO</name>
<sequence length="83" mass="9844">MMGSMVSNGYLLLFTCWFLFVFGLMTIFNFVEIPLYVDGDVSPIRSYYPCILILTCTVVFFVWLFFNWLGLKYFRHSPSAMRR</sequence>
<gene>
    <name type="ORF">SPAC227.19c</name>
</gene>